<gene>
    <name evidence="1" type="primary">hisS</name>
    <name type="ordered locus">Mlab_0415</name>
</gene>
<keyword id="KW-0030">Aminoacyl-tRNA synthetase</keyword>
<keyword id="KW-0067">ATP-binding</keyword>
<keyword id="KW-0963">Cytoplasm</keyword>
<keyword id="KW-0436">Ligase</keyword>
<keyword id="KW-0547">Nucleotide-binding</keyword>
<keyword id="KW-0648">Protein biosynthesis</keyword>
<keyword id="KW-1185">Reference proteome</keyword>
<protein>
    <recommendedName>
        <fullName evidence="1">Histidine--tRNA ligase</fullName>
        <ecNumber evidence="1">6.1.1.21</ecNumber>
    </recommendedName>
    <alternativeName>
        <fullName evidence="1">Histidyl-tRNA synthetase</fullName>
        <shortName evidence="1">HisRS</shortName>
    </alternativeName>
</protein>
<comment type="catalytic activity">
    <reaction evidence="1">
        <text>tRNA(His) + L-histidine + ATP = L-histidyl-tRNA(His) + AMP + diphosphate + H(+)</text>
        <dbReference type="Rhea" id="RHEA:17313"/>
        <dbReference type="Rhea" id="RHEA-COMP:9665"/>
        <dbReference type="Rhea" id="RHEA-COMP:9689"/>
        <dbReference type="ChEBI" id="CHEBI:15378"/>
        <dbReference type="ChEBI" id="CHEBI:30616"/>
        <dbReference type="ChEBI" id="CHEBI:33019"/>
        <dbReference type="ChEBI" id="CHEBI:57595"/>
        <dbReference type="ChEBI" id="CHEBI:78442"/>
        <dbReference type="ChEBI" id="CHEBI:78527"/>
        <dbReference type="ChEBI" id="CHEBI:456215"/>
        <dbReference type="EC" id="6.1.1.21"/>
    </reaction>
</comment>
<comment type="subcellular location">
    <subcellularLocation>
        <location evidence="1">Cytoplasm</location>
    </subcellularLocation>
</comment>
<comment type="similarity">
    <text evidence="1">Belongs to the class-II aminoacyl-tRNA synthetase family.</text>
</comment>
<accession>A2SQI5</accession>
<feature type="chain" id="PRO_1000016390" description="Histidine--tRNA ligase">
    <location>
        <begin position="1"/>
        <end position="410"/>
    </location>
</feature>
<reference key="1">
    <citation type="journal article" date="2009" name="Stand. Genomic Sci.">
        <title>Complete genome sequence of Methanocorpusculum labreanum type strain Z.</title>
        <authorList>
            <person name="Anderson I.J."/>
            <person name="Sieprawska-Lupa M."/>
            <person name="Goltsman E."/>
            <person name="Lapidus A."/>
            <person name="Copeland A."/>
            <person name="Glavina Del Rio T."/>
            <person name="Tice H."/>
            <person name="Dalin E."/>
            <person name="Barry K."/>
            <person name="Pitluck S."/>
            <person name="Hauser L."/>
            <person name="Land M."/>
            <person name="Lucas S."/>
            <person name="Richardson P."/>
            <person name="Whitman W.B."/>
            <person name="Kyrpides N.C."/>
        </authorList>
    </citation>
    <scope>NUCLEOTIDE SEQUENCE [LARGE SCALE GENOMIC DNA]</scope>
    <source>
        <strain>ATCC 43576 / DSM 4855 / Z</strain>
    </source>
</reference>
<evidence type="ECO:0000255" key="1">
    <source>
        <dbReference type="HAMAP-Rule" id="MF_00127"/>
    </source>
</evidence>
<name>SYH_METLZ</name>
<organism>
    <name type="scientific">Methanocorpusculum labreanum (strain ATCC 43576 / DSM 4855 / Z)</name>
    <dbReference type="NCBI Taxonomy" id="410358"/>
    <lineage>
        <taxon>Archaea</taxon>
        <taxon>Methanobacteriati</taxon>
        <taxon>Methanobacteriota</taxon>
        <taxon>Stenosarchaea group</taxon>
        <taxon>Methanomicrobia</taxon>
        <taxon>Methanomicrobiales</taxon>
        <taxon>Methanocorpusculaceae</taxon>
        <taxon>Methanocorpusculum</taxon>
    </lineage>
</organism>
<sequence>MIQKPRGTRDFLPAEMAQRRFVEQKMRAVAATFGYGEIVTPMFEELELFTIKSGEGIINEMYAFEDKGGRKITLRPEITAAVLRAYVNEAQMAPKPLRWFYFAECFRYERPQKGRYRQFWQFGSELIGADSAAADAEVISLAYELLRCTGVRFVMKVGHLAPMKHLLSGLDAPSQKQVMAALDKRDMDLLGTTLASLDSSDLFEPLKGLVTAKTLPEIFAVTGDIPEKARIEETFGYLEAQNIPFEQNFGIARGLDYYTGMVFEGFADNLGAENQILGGGVYRLAHLFGGKDVPSCGFGIGFDRVLVSLGEITPQTIPVVAVICTPETRIPAYNAASALRSAGITAVMDLLDRGFGAQLSSALKSGASFAVVIGEKEAAAGMITLKDLATAVQTEMSIDNAIEVIHGSCR</sequence>
<proteinExistence type="inferred from homology"/>
<dbReference type="EC" id="6.1.1.21" evidence="1"/>
<dbReference type="EMBL" id="CP000559">
    <property type="protein sequence ID" value="ABN06591.1"/>
    <property type="molecule type" value="Genomic_DNA"/>
</dbReference>
<dbReference type="RefSeq" id="WP_011832792.1">
    <property type="nucleotide sequence ID" value="NC_008942.1"/>
</dbReference>
<dbReference type="SMR" id="A2SQI5"/>
<dbReference type="STRING" id="410358.Mlab_0415"/>
<dbReference type="GeneID" id="4794487"/>
<dbReference type="KEGG" id="mla:Mlab_0415"/>
<dbReference type="eggNOG" id="arCOG00404">
    <property type="taxonomic scope" value="Archaea"/>
</dbReference>
<dbReference type="HOGENOM" id="CLU_025113_3_1_2"/>
<dbReference type="OrthoDB" id="8659at2157"/>
<dbReference type="Proteomes" id="UP000000365">
    <property type="component" value="Chromosome"/>
</dbReference>
<dbReference type="GO" id="GO:0005737">
    <property type="term" value="C:cytoplasm"/>
    <property type="evidence" value="ECO:0007669"/>
    <property type="project" value="UniProtKB-SubCell"/>
</dbReference>
<dbReference type="GO" id="GO:0005524">
    <property type="term" value="F:ATP binding"/>
    <property type="evidence" value="ECO:0007669"/>
    <property type="project" value="UniProtKB-UniRule"/>
</dbReference>
<dbReference type="GO" id="GO:0004821">
    <property type="term" value="F:histidine-tRNA ligase activity"/>
    <property type="evidence" value="ECO:0007669"/>
    <property type="project" value="UniProtKB-UniRule"/>
</dbReference>
<dbReference type="GO" id="GO:0006427">
    <property type="term" value="P:histidyl-tRNA aminoacylation"/>
    <property type="evidence" value="ECO:0007669"/>
    <property type="project" value="UniProtKB-UniRule"/>
</dbReference>
<dbReference type="CDD" id="cd00773">
    <property type="entry name" value="HisRS-like_core"/>
    <property type="match status" value="1"/>
</dbReference>
<dbReference type="CDD" id="cd00859">
    <property type="entry name" value="HisRS_anticodon"/>
    <property type="match status" value="1"/>
</dbReference>
<dbReference type="Gene3D" id="3.40.50.800">
    <property type="entry name" value="Anticodon-binding domain"/>
    <property type="match status" value="1"/>
</dbReference>
<dbReference type="Gene3D" id="3.30.930.10">
    <property type="entry name" value="Bira Bifunctional Protein, Domain 2"/>
    <property type="match status" value="1"/>
</dbReference>
<dbReference type="HAMAP" id="MF_00127">
    <property type="entry name" value="His_tRNA_synth"/>
    <property type="match status" value="1"/>
</dbReference>
<dbReference type="InterPro" id="IPR006195">
    <property type="entry name" value="aa-tRNA-synth_II"/>
</dbReference>
<dbReference type="InterPro" id="IPR045864">
    <property type="entry name" value="aa-tRNA-synth_II/BPL/LPL"/>
</dbReference>
<dbReference type="InterPro" id="IPR004154">
    <property type="entry name" value="Anticodon-bd"/>
</dbReference>
<dbReference type="InterPro" id="IPR036621">
    <property type="entry name" value="Anticodon-bd_dom_sf"/>
</dbReference>
<dbReference type="InterPro" id="IPR015807">
    <property type="entry name" value="His-tRNA-ligase"/>
</dbReference>
<dbReference type="InterPro" id="IPR041715">
    <property type="entry name" value="HisRS-like_core"/>
</dbReference>
<dbReference type="InterPro" id="IPR004516">
    <property type="entry name" value="HisRS/HisZ"/>
</dbReference>
<dbReference type="InterPro" id="IPR033656">
    <property type="entry name" value="HisRS_anticodon"/>
</dbReference>
<dbReference type="NCBIfam" id="TIGR00442">
    <property type="entry name" value="hisS"/>
    <property type="match status" value="1"/>
</dbReference>
<dbReference type="PANTHER" id="PTHR43707:SF1">
    <property type="entry name" value="HISTIDINE--TRNA LIGASE, MITOCHONDRIAL-RELATED"/>
    <property type="match status" value="1"/>
</dbReference>
<dbReference type="PANTHER" id="PTHR43707">
    <property type="entry name" value="HISTIDYL-TRNA SYNTHETASE"/>
    <property type="match status" value="1"/>
</dbReference>
<dbReference type="Pfam" id="PF03129">
    <property type="entry name" value="HGTP_anticodon"/>
    <property type="match status" value="1"/>
</dbReference>
<dbReference type="Pfam" id="PF13393">
    <property type="entry name" value="tRNA-synt_His"/>
    <property type="match status" value="1"/>
</dbReference>
<dbReference type="PIRSF" id="PIRSF001549">
    <property type="entry name" value="His-tRNA_synth"/>
    <property type="match status" value="1"/>
</dbReference>
<dbReference type="SUPFAM" id="SSF52954">
    <property type="entry name" value="Class II aaRS ABD-related"/>
    <property type="match status" value="1"/>
</dbReference>
<dbReference type="SUPFAM" id="SSF55681">
    <property type="entry name" value="Class II aaRS and biotin synthetases"/>
    <property type="match status" value="1"/>
</dbReference>
<dbReference type="PROSITE" id="PS50862">
    <property type="entry name" value="AA_TRNA_LIGASE_II"/>
    <property type="match status" value="1"/>
</dbReference>